<proteinExistence type="evidence at protein level"/>
<sequence length="449" mass="49844">MLNYTGLENKNVLVVGLAKSGYEAAKLLSKLGANVTVNDGKDLSQDAHAKDLESMGISVVSGSHPLTLLDNNPIIVKNPGIPYTVSIIDEAVKRGLKILTEVELSYLISEAPIIAVTGTNGKTTVTSLIGDMFKKSRLTGRLSGNIGYVASKVAQEVKPTDYLVTELSSFQLLGIEKYKPHIAIITNIYSAHLDYHENLENYQNAKKQIYKNQTEEDYLICNYHQRQVIESEELKAKTLYFSTQQEVDGIYIKDGFIVYKGVRIINTEDLVLPGEHNLENILAAVLACILAGVPIKAIIDSLTTFSGIEHRLQYVGTNRTNKYYNDSKATNTLATQFALNSFNQPIIWLCGGLDRGNEFDELIPYMENVRAMVVFGQTKAKFAKLGNSQGKSVIEANNVEDAVDKVQDIIEPNDVVLLSPACASWDQYSTFEERGEKFIERFRAHLPSY</sequence>
<accession>P0A090</accession>
<accession>O07323</accession>
<accession>O33595</accession>
<feature type="chain" id="PRO_0000109089" description="UDP-N-acetylmuramoylalanine--D-glutamate ligase">
    <location>
        <begin position="1"/>
        <end position="449"/>
    </location>
</feature>
<feature type="binding site" evidence="2">
    <location>
        <begin position="118"/>
        <end position="124"/>
    </location>
    <ligand>
        <name>ATP</name>
        <dbReference type="ChEBI" id="CHEBI:30616"/>
    </ligand>
</feature>
<keyword id="KW-0067">ATP-binding</keyword>
<keyword id="KW-0131">Cell cycle</keyword>
<keyword id="KW-0132">Cell division</keyword>
<keyword id="KW-0133">Cell shape</keyword>
<keyword id="KW-0961">Cell wall biogenesis/degradation</keyword>
<keyword id="KW-0963">Cytoplasm</keyword>
<keyword id="KW-0436">Ligase</keyword>
<keyword id="KW-0547">Nucleotide-binding</keyword>
<keyword id="KW-0573">Peptidoglycan synthesis</keyword>
<organism>
    <name type="scientific">Staphylococcus aureus (strain N315)</name>
    <dbReference type="NCBI Taxonomy" id="158879"/>
    <lineage>
        <taxon>Bacteria</taxon>
        <taxon>Bacillati</taxon>
        <taxon>Bacillota</taxon>
        <taxon>Bacilli</taxon>
        <taxon>Bacillales</taxon>
        <taxon>Staphylococcaceae</taxon>
        <taxon>Staphylococcus</taxon>
    </lineage>
</organism>
<dbReference type="EC" id="6.3.2.9"/>
<dbReference type="EMBL" id="BA000018">
    <property type="protein sequence ID" value="BAB42278.1"/>
    <property type="molecule type" value="Genomic_DNA"/>
</dbReference>
<dbReference type="RefSeq" id="WP_000935991.1">
    <property type="nucleotide sequence ID" value="NC_002745.2"/>
</dbReference>
<dbReference type="SMR" id="P0A090"/>
<dbReference type="EnsemblBacteria" id="BAB42278">
    <property type="protein sequence ID" value="BAB42278"/>
    <property type="gene ID" value="BAB42278"/>
</dbReference>
<dbReference type="KEGG" id="sau:SA1026"/>
<dbReference type="HOGENOM" id="CLU_032540_0_1_9"/>
<dbReference type="UniPathway" id="UPA00219"/>
<dbReference type="GO" id="GO:0005737">
    <property type="term" value="C:cytoplasm"/>
    <property type="evidence" value="ECO:0007669"/>
    <property type="project" value="UniProtKB-SubCell"/>
</dbReference>
<dbReference type="GO" id="GO:0005524">
    <property type="term" value="F:ATP binding"/>
    <property type="evidence" value="ECO:0007669"/>
    <property type="project" value="UniProtKB-UniRule"/>
</dbReference>
<dbReference type="GO" id="GO:0008764">
    <property type="term" value="F:UDP-N-acetylmuramoylalanine-D-glutamate ligase activity"/>
    <property type="evidence" value="ECO:0007669"/>
    <property type="project" value="UniProtKB-UniRule"/>
</dbReference>
<dbReference type="GO" id="GO:0051301">
    <property type="term" value="P:cell division"/>
    <property type="evidence" value="ECO:0007669"/>
    <property type="project" value="UniProtKB-KW"/>
</dbReference>
<dbReference type="GO" id="GO:0071555">
    <property type="term" value="P:cell wall organization"/>
    <property type="evidence" value="ECO:0007669"/>
    <property type="project" value="UniProtKB-KW"/>
</dbReference>
<dbReference type="GO" id="GO:0009252">
    <property type="term" value="P:peptidoglycan biosynthetic process"/>
    <property type="evidence" value="ECO:0007669"/>
    <property type="project" value="UniProtKB-UniRule"/>
</dbReference>
<dbReference type="GO" id="GO:0008360">
    <property type="term" value="P:regulation of cell shape"/>
    <property type="evidence" value="ECO:0007669"/>
    <property type="project" value="UniProtKB-KW"/>
</dbReference>
<dbReference type="Gene3D" id="3.90.190.20">
    <property type="entry name" value="Mur ligase, C-terminal domain"/>
    <property type="match status" value="1"/>
</dbReference>
<dbReference type="Gene3D" id="3.40.1190.10">
    <property type="entry name" value="Mur-like, catalytic domain"/>
    <property type="match status" value="1"/>
</dbReference>
<dbReference type="Gene3D" id="3.40.50.720">
    <property type="entry name" value="NAD(P)-binding Rossmann-like Domain"/>
    <property type="match status" value="1"/>
</dbReference>
<dbReference type="HAMAP" id="MF_00639">
    <property type="entry name" value="MurD"/>
    <property type="match status" value="1"/>
</dbReference>
<dbReference type="InterPro" id="IPR036565">
    <property type="entry name" value="Mur-like_cat_sf"/>
</dbReference>
<dbReference type="InterPro" id="IPR004101">
    <property type="entry name" value="Mur_ligase_C"/>
</dbReference>
<dbReference type="InterPro" id="IPR036615">
    <property type="entry name" value="Mur_ligase_C_dom_sf"/>
</dbReference>
<dbReference type="InterPro" id="IPR013221">
    <property type="entry name" value="Mur_ligase_cen"/>
</dbReference>
<dbReference type="InterPro" id="IPR005762">
    <property type="entry name" value="MurD"/>
</dbReference>
<dbReference type="NCBIfam" id="TIGR01087">
    <property type="entry name" value="murD"/>
    <property type="match status" value="1"/>
</dbReference>
<dbReference type="PANTHER" id="PTHR43692">
    <property type="entry name" value="UDP-N-ACETYLMURAMOYLALANINE--D-GLUTAMATE LIGASE"/>
    <property type="match status" value="1"/>
</dbReference>
<dbReference type="PANTHER" id="PTHR43692:SF1">
    <property type="entry name" value="UDP-N-ACETYLMURAMOYLALANINE--D-GLUTAMATE LIGASE"/>
    <property type="match status" value="1"/>
</dbReference>
<dbReference type="Pfam" id="PF02875">
    <property type="entry name" value="Mur_ligase_C"/>
    <property type="match status" value="1"/>
</dbReference>
<dbReference type="Pfam" id="PF08245">
    <property type="entry name" value="Mur_ligase_M"/>
    <property type="match status" value="1"/>
</dbReference>
<dbReference type="Pfam" id="PF21799">
    <property type="entry name" value="MurD-like_N"/>
    <property type="match status" value="1"/>
</dbReference>
<dbReference type="SUPFAM" id="SSF51984">
    <property type="entry name" value="MurCD N-terminal domain"/>
    <property type="match status" value="1"/>
</dbReference>
<dbReference type="SUPFAM" id="SSF53623">
    <property type="entry name" value="MurD-like peptide ligases, catalytic domain"/>
    <property type="match status" value="1"/>
</dbReference>
<dbReference type="SUPFAM" id="SSF53244">
    <property type="entry name" value="MurD-like peptide ligases, peptide-binding domain"/>
    <property type="match status" value="1"/>
</dbReference>
<evidence type="ECO:0000250" key="1"/>
<evidence type="ECO:0000255" key="2"/>
<evidence type="ECO:0000305" key="3"/>
<comment type="function">
    <text evidence="1">Cell wall formation. Catalyzes the addition of glutamate to the nucleotide precursor UDP-N-acetylmuramoyl-L-alanine (UMA).</text>
</comment>
<comment type="catalytic activity">
    <reaction>
        <text>UDP-N-acetyl-alpha-D-muramoyl-L-alanine + D-glutamate + ATP = UDP-N-acetyl-alpha-D-muramoyl-L-alanyl-D-glutamate + ADP + phosphate + H(+)</text>
        <dbReference type="Rhea" id="RHEA:16429"/>
        <dbReference type="ChEBI" id="CHEBI:15378"/>
        <dbReference type="ChEBI" id="CHEBI:29986"/>
        <dbReference type="ChEBI" id="CHEBI:30616"/>
        <dbReference type="ChEBI" id="CHEBI:43474"/>
        <dbReference type="ChEBI" id="CHEBI:83898"/>
        <dbReference type="ChEBI" id="CHEBI:83900"/>
        <dbReference type="ChEBI" id="CHEBI:456216"/>
        <dbReference type="EC" id="6.3.2.9"/>
    </reaction>
</comment>
<comment type="pathway">
    <text>Cell wall biogenesis; peptidoglycan biosynthesis.</text>
</comment>
<comment type="subcellular location">
    <subcellularLocation>
        <location evidence="1">Cytoplasm</location>
    </subcellularLocation>
</comment>
<comment type="similarity">
    <text evidence="3">Belongs to the MurCDEF family.</text>
</comment>
<protein>
    <recommendedName>
        <fullName>UDP-N-acetylmuramoylalanine--D-glutamate ligase</fullName>
        <ecNumber>6.3.2.9</ecNumber>
    </recommendedName>
    <alternativeName>
        <fullName>D-glutamic acid-adding enzyme</fullName>
    </alternativeName>
    <alternativeName>
        <fullName>UDP-N-acetylmuramoyl-L-alanyl-D-glutamate synthetase</fullName>
    </alternativeName>
</protein>
<gene>
    <name type="primary">murD</name>
    <name type="ordered locus">SA1026</name>
</gene>
<reference key="1">
    <citation type="journal article" date="2001" name="Lancet">
        <title>Whole genome sequencing of meticillin-resistant Staphylococcus aureus.</title>
        <authorList>
            <person name="Kuroda M."/>
            <person name="Ohta T."/>
            <person name="Uchiyama I."/>
            <person name="Baba T."/>
            <person name="Yuzawa H."/>
            <person name="Kobayashi I."/>
            <person name="Cui L."/>
            <person name="Oguchi A."/>
            <person name="Aoki K."/>
            <person name="Nagai Y."/>
            <person name="Lian J.-Q."/>
            <person name="Ito T."/>
            <person name="Kanamori M."/>
            <person name="Matsumaru H."/>
            <person name="Maruyama A."/>
            <person name="Murakami H."/>
            <person name="Hosoyama A."/>
            <person name="Mizutani-Ui Y."/>
            <person name="Takahashi N.K."/>
            <person name="Sawano T."/>
            <person name="Inoue R."/>
            <person name="Kaito C."/>
            <person name="Sekimizu K."/>
            <person name="Hirakawa H."/>
            <person name="Kuhara S."/>
            <person name="Goto S."/>
            <person name="Yabuzaki J."/>
            <person name="Kanehisa M."/>
            <person name="Yamashita A."/>
            <person name="Oshima K."/>
            <person name="Furuya K."/>
            <person name="Yoshino C."/>
            <person name="Shiba T."/>
            <person name="Hattori M."/>
            <person name="Ogasawara N."/>
            <person name="Hayashi H."/>
            <person name="Hiramatsu K."/>
        </authorList>
    </citation>
    <scope>NUCLEOTIDE SEQUENCE [LARGE SCALE GENOMIC DNA]</scope>
    <source>
        <strain>N315</strain>
    </source>
</reference>
<reference key="2">
    <citation type="submission" date="2007-10" db="UniProtKB">
        <title>Shotgun proteomic analysis of total and membrane protein extracts of S. aureus strain N315.</title>
        <authorList>
            <person name="Vaezzadeh A.R."/>
            <person name="Deshusses J."/>
            <person name="Lescuyer P."/>
            <person name="Hochstrasser D.F."/>
        </authorList>
    </citation>
    <scope>IDENTIFICATION BY MASS SPECTROMETRY [LARGE SCALE ANALYSIS]</scope>
    <source>
        <strain>N315</strain>
    </source>
</reference>
<name>MURD_STAAN</name>